<protein>
    <recommendedName>
        <fullName evidence="1">Large ribosomal subunit protein bL34</fullName>
    </recommendedName>
    <alternativeName>
        <fullName evidence="2">50S ribosomal protein L34</fullName>
    </alternativeName>
</protein>
<comment type="similarity">
    <text evidence="1">Belongs to the bacterial ribosomal protein bL34 family.</text>
</comment>
<proteinExistence type="inferred from homology"/>
<gene>
    <name evidence="1" type="primary">rpmH</name>
    <name type="ordered locus">Mfla_2761</name>
</gene>
<reference key="1">
    <citation type="submission" date="2006-03" db="EMBL/GenBank/DDBJ databases">
        <title>Complete sequence of Methylobacillus flagellatus KT.</title>
        <authorList>
            <consortium name="US DOE Joint Genome Institute"/>
            <person name="Copeland A."/>
            <person name="Lucas S."/>
            <person name="Lapidus A."/>
            <person name="Barry K."/>
            <person name="Detter J.C."/>
            <person name="Glavina del Rio T."/>
            <person name="Hammon N."/>
            <person name="Israni S."/>
            <person name="Dalin E."/>
            <person name="Tice H."/>
            <person name="Pitluck S."/>
            <person name="Brettin T."/>
            <person name="Bruce D."/>
            <person name="Han C."/>
            <person name="Tapia R."/>
            <person name="Saunders E."/>
            <person name="Gilna P."/>
            <person name="Schmutz J."/>
            <person name="Larimer F."/>
            <person name="Land M."/>
            <person name="Kyrpides N."/>
            <person name="Anderson I."/>
            <person name="Richardson P."/>
        </authorList>
    </citation>
    <scope>NUCLEOTIDE SEQUENCE [LARGE SCALE GENOMIC DNA]</scope>
    <source>
        <strain>ATCC 51484 / DSM 6875 / VKM B-1610 / KT</strain>
    </source>
</reference>
<accession>Q1GXL3</accession>
<evidence type="ECO:0000255" key="1">
    <source>
        <dbReference type="HAMAP-Rule" id="MF_00391"/>
    </source>
</evidence>
<evidence type="ECO:0000305" key="2"/>
<sequence length="44" mass="5038">MKRTYQPSKTRRARTHGFLVRMKTRGGRAVIAARRAKGRARLAV</sequence>
<keyword id="KW-1185">Reference proteome</keyword>
<keyword id="KW-0687">Ribonucleoprotein</keyword>
<keyword id="KW-0689">Ribosomal protein</keyword>
<organism>
    <name type="scientific">Methylobacillus flagellatus (strain ATCC 51484 / DSM 6875 / VKM B-1610 / KT)</name>
    <dbReference type="NCBI Taxonomy" id="265072"/>
    <lineage>
        <taxon>Bacteria</taxon>
        <taxon>Pseudomonadati</taxon>
        <taxon>Pseudomonadota</taxon>
        <taxon>Betaproteobacteria</taxon>
        <taxon>Nitrosomonadales</taxon>
        <taxon>Methylophilaceae</taxon>
        <taxon>Methylobacillus</taxon>
    </lineage>
</organism>
<dbReference type="EMBL" id="CP000284">
    <property type="protein sequence ID" value="ABE51024.1"/>
    <property type="molecule type" value="Genomic_DNA"/>
</dbReference>
<dbReference type="RefSeq" id="WP_011480977.1">
    <property type="nucleotide sequence ID" value="NC_007947.1"/>
</dbReference>
<dbReference type="SMR" id="Q1GXL3"/>
<dbReference type="STRING" id="265072.Mfla_2761"/>
<dbReference type="KEGG" id="mfa:Mfla_2761"/>
<dbReference type="eggNOG" id="COG0230">
    <property type="taxonomic scope" value="Bacteria"/>
</dbReference>
<dbReference type="HOGENOM" id="CLU_129938_2_0_4"/>
<dbReference type="Proteomes" id="UP000002440">
    <property type="component" value="Chromosome"/>
</dbReference>
<dbReference type="GO" id="GO:1990904">
    <property type="term" value="C:ribonucleoprotein complex"/>
    <property type="evidence" value="ECO:0007669"/>
    <property type="project" value="UniProtKB-KW"/>
</dbReference>
<dbReference type="GO" id="GO:0005840">
    <property type="term" value="C:ribosome"/>
    <property type="evidence" value="ECO:0007669"/>
    <property type="project" value="UniProtKB-KW"/>
</dbReference>
<dbReference type="GO" id="GO:0003735">
    <property type="term" value="F:structural constituent of ribosome"/>
    <property type="evidence" value="ECO:0007669"/>
    <property type="project" value="InterPro"/>
</dbReference>
<dbReference type="GO" id="GO:0006412">
    <property type="term" value="P:translation"/>
    <property type="evidence" value="ECO:0007669"/>
    <property type="project" value="UniProtKB-UniRule"/>
</dbReference>
<dbReference type="FunFam" id="1.10.287.3980:FF:000001">
    <property type="entry name" value="Mitochondrial ribosomal protein L34"/>
    <property type="match status" value="1"/>
</dbReference>
<dbReference type="Gene3D" id="1.10.287.3980">
    <property type="match status" value="1"/>
</dbReference>
<dbReference type="HAMAP" id="MF_00391">
    <property type="entry name" value="Ribosomal_bL34"/>
    <property type="match status" value="1"/>
</dbReference>
<dbReference type="InterPro" id="IPR000271">
    <property type="entry name" value="Ribosomal_bL34"/>
</dbReference>
<dbReference type="InterPro" id="IPR020939">
    <property type="entry name" value="Ribosomal_bL34_CS"/>
</dbReference>
<dbReference type="NCBIfam" id="TIGR01030">
    <property type="entry name" value="rpmH_bact"/>
    <property type="match status" value="1"/>
</dbReference>
<dbReference type="PANTHER" id="PTHR14503:SF4">
    <property type="entry name" value="LARGE RIBOSOMAL SUBUNIT PROTEIN BL34M"/>
    <property type="match status" value="1"/>
</dbReference>
<dbReference type="PANTHER" id="PTHR14503">
    <property type="entry name" value="MITOCHONDRIAL RIBOSOMAL PROTEIN 34 FAMILY MEMBER"/>
    <property type="match status" value="1"/>
</dbReference>
<dbReference type="Pfam" id="PF00468">
    <property type="entry name" value="Ribosomal_L34"/>
    <property type="match status" value="1"/>
</dbReference>
<dbReference type="PROSITE" id="PS00784">
    <property type="entry name" value="RIBOSOMAL_L34"/>
    <property type="match status" value="1"/>
</dbReference>
<name>RL34_METFK</name>
<feature type="chain" id="PRO_1000013372" description="Large ribosomal subunit protein bL34">
    <location>
        <begin position="1"/>
        <end position="44"/>
    </location>
</feature>